<comment type="function">
    <text evidence="1">Essential for the control of the cell cycle at the G2/M (mitosis) transition.</text>
</comment>
<comment type="subunit">
    <text evidence="1">Interacts with the CDK1 protein kinase to form a serine/threonine kinase holoenzyme complex also known as maturation promoting factor (MPF). The cyclin subunit imparts substrate specificity to the complex (By similarity).</text>
</comment>
<comment type="alternative products">
    <event type="alternative splicing"/>
    <isoform>
        <id>Q9IBG0-1</id>
        <name>1</name>
        <sequence type="displayed"/>
    </isoform>
    <isoform>
        <id>Q9IBG0-2</id>
        <name>2</name>
        <sequence type="described" ref="VSP_001252"/>
    </isoform>
</comment>
<comment type="developmental stage">
    <text>Accumulates steadily during G2 and is abruptly destroyed at mitosis.</text>
</comment>
<comment type="similarity">
    <text evidence="3">Belongs to the cyclin family. Cyclin AB subfamily.</text>
</comment>
<dbReference type="EMBL" id="AB030070">
    <property type="protein sequence ID" value="BAA89698.1"/>
    <property type="molecule type" value="mRNA"/>
</dbReference>
<dbReference type="EMBL" id="AB030072">
    <property type="protein sequence ID" value="BAA89700.1"/>
    <property type="molecule type" value="mRNA"/>
</dbReference>
<dbReference type="RefSeq" id="NP_001098138.1">
    <property type="nucleotide sequence ID" value="NM_001104668.1"/>
</dbReference>
<dbReference type="SMR" id="Q9IBG0"/>
<dbReference type="STRING" id="8090.ENSORLP00000000759"/>
<dbReference type="GeneID" id="100049213"/>
<dbReference type="KEGG" id="ola:100049213"/>
<dbReference type="CTD" id="9133"/>
<dbReference type="eggNOG" id="KOG0653">
    <property type="taxonomic scope" value="Eukaryota"/>
</dbReference>
<dbReference type="InParanoid" id="Q9IBG0"/>
<dbReference type="OrthoDB" id="5590282at2759"/>
<dbReference type="Proteomes" id="UP000001038">
    <property type="component" value="Unplaced"/>
</dbReference>
<dbReference type="Proteomes" id="UP000265180">
    <property type="component" value="Chromosome 9"/>
</dbReference>
<dbReference type="Proteomes" id="UP000265200">
    <property type="component" value="Chromosome 9"/>
</dbReference>
<dbReference type="GO" id="GO:0000307">
    <property type="term" value="C:cyclin-dependent protein kinase holoenzyme complex"/>
    <property type="evidence" value="ECO:0000318"/>
    <property type="project" value="GO_Central"/>
</dbReference>
<dbReference type="GO" id="GO:0005737">
    <property type="term" value="C:cytoplasm"/>
    <property type="evidence" value="ECO:0000318"/>
    <property type="project" value="GO_Central"/>
</dbReference>
<dbReference type="GO" id="GO:0005815">
    <property type="term" value="C:microtubule organizing center"/>
    <property type="evidence" value="ECO:0000318"/>
    <property type="project" value="GO_Central"/>
</dbReference>
<dbReference type="GO" id="GO:0005634">
    <property type="term" value="C:nucleus"/>
    <property type="evidence" value="ECO:0000318"/>
    <property type="project" value="GO_Central"/>
</dbReference>
<dbReference type="GO" id="GO:0016538">
    <property type="term" value="F:cyclin-dependent protein serine/threonine kinase regulator activity"/>
    <property type="evidence" value="ECO:0000318"/>
    <property type="project" value="GO_Central"/>
</dbReference>
<dbReference type="GO" id="GO:0051301">
    <property type="term" value="P:cell division"/>
    <property type="evidence" value="ECO:0007669"/>
    <property type="project" value="UniProtKB-KW"/>
</dbReference>
<dbReference type="GO" id="GO:0000082">
    <property type="term" value="P:G1/S transition of mitotic cell cycle"/>
    <property type="evidence" value="ECO:0000318"/>
    <property type="project" value="GO_Central"/>
</dbReference>
<dbReference type="CDD" id="cd20507">
    <property type="entry name" value="CYCLIN_CCNB1-like_rpt1"/>
    <property type="match status" value="1"/>
</dbReference>
<dbReference type="FunFam" id="1.10.472.10:FF:000198">
    <property type="entry name" value="G2/mitotic-specific cyclin-B1"/>
    <property type="match status" value="1"/>
</dbReference>
<dbReference type="Gene3D" id="1.10.472.10">
    <property type="entry name" value="Cyclin-like"/>
    <property type="match status" value="2"/>
</dbReference>
<dbReference type="InterPro" id="IPR039361">
    <property type="entry name" value="Cyclin"/>
</dbReference>
<dbReference type="InterPro" id="IPR013763">
    <property type="entry name" value="Cyclin-like_dom"/>
</dbReference>
<dbReference type="InterPro" id="IPR036915">
    <property type="entry name" value="Cyclin-like_sf"/>
</dbReference>
<dbReference type="InterPro" id="IPR046965">
    <property type="entry name" value="Cyclin_A/B-like"/>
</dbReference>
<dbReference type="InterPro" id="IPR004367">
    <property type="entry name" value="Cyclin_C-dom"/>
</dbReference>
<dbReference type="InterPro" id="IPR006671">
    <property type="entry name" value="Cyclin_N"/>
</dbReference>
<dbReference type="InterPro" id="IPR048258">
    <property type="entry name" value="Cyclins_cyclin-box"/>
</dbReference>
<dbReference type="PANTHER" id="PTHR10177">
    <property type="entry name" value="CYCLINS"/>
    <property type="match status" value="1"/>
</dbReference>
<dbReference type="Pfam" id="PF02984">
    <property type="entry name" value="Cyclin_C"/>
    <property type="match status" value="1"/>
</dbReference>
<dbReference type="Pfam" id="PF00134">
    <property type="entry name" value="Cyclin_N"/>
    <property type="match status" value="1"/>
</dbReference>
<dbReference type="PIRSF" id="PIRSF001771">
    <property type="entry name" value="Cyclin_A_B_D_E"/>
    <property type="match status" value="1"/>
</dbReference>
<dbReference type="SMART" id="SM00385">
    <property type="entry name" value="CYCLIN"/>
    <property type="match status" value="2"/>
</dbReference>
<dbReference type="SMART" id="SM01332">
    <property type="entry name" value="Cyclin_C"/>
    <property type="match status" value="1"/>
</dbReference>
<dbReference type="SUPFAM" id="SSF47954">
    <property type="entry name" value="Cyclin-like"/>
    <property type="match status" value="2"/>
</dbReference>
<dbReference type="PROSITE" id="PS00292">
    <property type="entry name" value="CYCLINS"/>
    <property type="match status" value="1"/>
</dbReference>
<keyword id="KW-0025">Alternative splicing</keyword>
<keyword id="KW-0131">Cell cycle</keyword>
<keyword id="KW-0132">Cell division</keyword>
<keyword id="KW-0195">Cyclin</keyword>
<keyword id="KW-0498">Mitosis</keyword>
<keyword id="KW-1185">Reference proteome</keyword>
<protein>
    <recommendedName>
        <fullName>G2/mitotic-specific cyclin-B2</fullName>
    </recommendedName>
</protein>
<feature type="chain" id="PRO_0000080368" description="G2/mitotic-specific cyclin-B2">
    <location>
        <begin position="1"/>
        <end position="387"/>
    </location>
</feature>
<feature type="splice variant" id="VSP_001252" description="In isoform 2." evidence="2">
    <location>
        <begin position="48"/>
        <end position="75"/>
    </location>
</feature>
<feature type="sequence conflict" description="In Ref. 1; BAA89700." evidence="3" ref="1">
    <original>H</original>
    <variation>P</variation>
    <location>
        <position position="387"/>
    </location>
</feature>
<proteinExistence type="evidence at transcript level"/>
<name>CCNB2_ORYLA</name>
<sequence>MSSVEIVAQQLLAAEHPRRMGKGAAADPRRAALGELTNLNAAAATNGKVGPAKKPLKASCAQKPKLTQLVASMIQTGAAASAPVLAKPSVKEEQELCQAFSEVLLAVQDVDEQDADQPQLCSQYVKDIYKYLHILEEQQPVRANYMQGYEVTERMRALLVDWLVQVHSRFQLLQETLYLTVAILDRFLQVHPVSRRKLQLVGVTAMLVACKYEEMYAPEVGDFAYITDNAFTKSQIVEMEQVILRSLSFQLGRPLPLHFLRRATKVAGADVEKHTLAKYLMELTLLDYHMVHYRPSEVAAAALCLSQLLLDGLPWSLTQQQYSTYEEQHLKPIMQHMAKNVVLVNEGRTKFLAVKKKYSSSKLMKISLIPQLNSSTVKTMADALHDH</sequence>
<gene>
    <name type="primary">ccnb2</name>
</gene>
<organism>
    <name type="scientific">Oryzias latipes</name>
    <name type="common">Japanese rice fish</name>
    <name type="synonym">Japanese killifish</name>
    <dbReference type="NCBI Taxonomy" id="8090"/>
    <lineage>
        <taxon>Eukaryota</taxon>
        <taxon>Metazoa</taxon>
        <taxon>Chordata</taxon>
        <taxon>Craniata</taxon>
        <taxon>Vertebrata</taxon>
        <taxon>Euteleostomi</taxon>
        <taxon>Actinopterygii</taxon>
        <taxon>Neopterygii</taxon>
        <taxon>Teleostei</taxon>
        <taxon>Neoteleostei</taxon>
        <taxon>Acanthomorphata</taxon>
        <taxon>Ovalentaria</taxon>
        <taxon>Atherinomorphae</taxon>
        <taxon>Beloniformes</taxon>
        <taxon>Adrianichthyidae</taxon>
        <taxon>Oryziinae</taxon>
        <taxon>Oryzias</taxon>
    </lineage>
</organism>
<evidence type="ECO:0000250" key="1"/>
<evidence type="ECO:0000303" key="2">
    <source ref="1"/>
</evidence>
<evidence type="ECO:0000305" key="3"/>
<reference key="1">
    <citation type="journal article" date="2000" name="Zool. Sci.">
        <title>Differential expression of cyclins B1 and B2 during medaka (Oryzias latipes) spermatogenesis.</title>
        <authorList>
            <person name="Mita K."/>
            <person name="Ohbayashi T."/>
            <person name="Tomita K."/>
            <person name="Shimizu Y."/>
            <person name="Kondo T."/>
            <person name="Yamashita M."/>
        </authorList>
    </citation>
    <scope>NUCLEOTIDE SEQUENCE [MRNA] (ISOFORMS 1 AND 2)</scope>
    <source>
        <tissue>Testis</tissue>
    </source>
</reference>
<accession>Q9IBG0</accession>
<accession>Q9IBF8</accession>